<accession>P86006</accession>
<reference evidence="4" key="1">
    <citation type="submission" date="2008-07" db="UniProtKB">
        <authorList>
            <person name="Sabater Jara A.B."/>
            <person name="Almagro L."/>
            <person name="Pedreno M.A."/>
        </authorList>
    </citation>
    <scope>PROTEIN SEQUENCE</scope>
</reference>
<proteinExistence type="evidence at protein level"/>
<protein>
    <recommendedName>
        <fullName evidence="1">Peroxidase 7</fullName>
        <ecNumber>1.11.1.7</ecNumber>
    </recommendedName>
</protein>
<name>PER7_CAPAN</name>
<feature type="chain" id="PRO_0000363734" description="Peroxidase 7">
    <location>
        <begin position="1" status="less than"/>
        <end position="9" status="greater than"/>
    </location>
</feature>
<feature type="unsure residue" description="F or M">
    <location>
        <position position="2"/>
    </location>
</feature>
<feature type="unsure residue" description="I or L">
    <location>
        <position position="5"/>
    </location>
</feature>
<feature type="unsure residue" description="I or L">
    <location>
        <position position="8"/>
    </location>
</feature>
<feature type="unsure residue" description="K or Q">
    <location>
        <position position="9"/>
    </location>
</feature>
<feature type="non-terminal residue">
    <location>
        <position position="1"/>
    </location>
</feature>
<feature type="non-terminal residue">
    <location>
        <position position="9"/>
    </location>
</feature>
<sequence length="9" mass="1007">GFDVIDTIK</sequence>
<evidence type="ECO:0000250" key="1">
    <source>
        <dbReference type="UniProtKB" id="P22195"/>
    </source>
</evidence>
<evidence type="ECO:0000250" key="2">
    <source>
        <dbReference type="UniProtKB" id="P84516"/>
    </source>
</evidence>
<evidence type="ECO:0000255" key="3">
    <source>
        <dbReference type="PROSITE-ProRule" id="PRU00297"/>
    </source>
</evidence>
<evidence type="ECO:0000305" key="4"/>
<comment type="function">
    <text evidence="4">Removal of H(2)O(2), oxidation of toxic reductants, biosynthesis and degradation of lignin, suberization, auxin catabolism, response to environmental stresses such as wounding, pathogen attack and oxidative stress. These functions might be dependent on each isozyme/isoform in each plant tissue.</text>
</comment>
<comment type="catalytic activity">
    <reaction>
        <text>2 a phenolic donor + H2O2 = 2 a phenolic radical donor + 2 H2O</text>
        <dbReference type="Rhea" id="RHEA:56136"/>
        <dbReference type="ChEBI" id="CHEBI:15377"/>
        <dbReference type="ChEBI" id="CHEBI:16240"/>
        <dbReference type="ChEBI" id="CHEBI:139520"/>
        <dbReference type="ChEBI" id="CHEBI:139521"/>
        <dbReference type="EC" id="1.11.1.7"/>
    </reaction>
</comment>
<comment type="cofactor">
    <cofactor evidence="1 3">
        <name>heme b</name>
        <dbReference type="ChEBI" id="CHEBI:60344"/>
    </cofactor>
    <text evidence="1 3">Binds 1 heme b (iron(II)-protoporphyrin IX) group per subunit.</text>
</comment>
<comment type="cofactor">
    <cofactor evidence="1 3">
        <name>Ca(2+)</name>
        <dbReference type="ChEBI" id="CHEBI:29108"/>
    </cofactor>
    <text evidence="1 3">Binds 2 calcium ions per subunit.</text>
</comment>
<comment type="subcellular location">
    <subcellularLocation>
        <location evidence="2 3">Secreted</location>
    </subcellularLocation>
</comment>
<comment type="similarity">
    <text evidence="3">Belongs to the peroxidase family. Classical plant (class III) peroxidase subfamily.</text>
</comment>
<keyword id="KW-0106">Calcium</keyword>
<keyword id="KW-0903">Direct protein sequencing</keyword>
<keyword id="KW-0349">Heme</keyword>
<keyword id="KW-0376">Hydrogen peroxide</keyword>
<keyword id="KW-0408">Iron</keyword>
<keyword id="KW-0479">Metal-binding</keyword>
<keyword id="KW-0560">Oxidoreductase</keyword>
<keyword id="KW-0575">Peroxidase</keyword>
<keyword id="KW-0964">Secreted</keyword>
<dbReference type="EC" id="1.11.1.7"/>
<dbReference type="GO" id="GO:0005576">
    <property type="term" value="C:extracellular region"/>
    <property type="evidence" value="ECO:0007669"/>
    <property type="project" value="UniProtKB-SubCell"/>
</dbReference>
<dbReference type="GO" id="GO:0140825">
    <property type="term" value="F:lactoperoxidase activity"/>
    <property type="evidence" value="ECO:0007669"/>
    <property type="project" value="UniProtKB-EC"/>
</dbReference>
<dbReference type="GO" id="GO:0046872">
    <property type="term" value="F:metal ion binding"/>
    <property type="evidence" value="ECO:0007669"/>
    <property type="project" value="UniProtKB-KW"/>
</dbReference>
<dbReference type="GO" id="GO:0042744">
    <property type="term" value="P:hydrogen peroxide catabolic process"/>
    <property type="evidence" value="ECO:0007669"/>
    <property type="project" value="UniProtKB-KW"/>
</dbReference>
<organism>
    <name type="scientific">Capsicum annuum</name>
    <name type="common">Capsicum pepper</name>
    <dbReference type="NCBI Taxonomy" id="4072"/>
    <lineage>
        <taxon>Eukaryota</taxon>
        <taxon>Viridiplantae</taxon>
        <taxon>Streptophyta</taxon>
        <taxon>Embryophyta</taxon>
        <taxon>Tracheophyta</taxon>
        <taxon>Spermatophyta</taxon>
        <taxon>Magnoliopsida</taxon>
        <taxon>eudicotyledons</taxon>
        <taxon>Gunneridae</taxon>
        <taxon>Pentapetalae</taxon>
        <taxon>asterids</taxon>
        <taxon>lamiids</taxon>
        <taxon>Solanales</taxon>
        <taxon>Solanaceae</taxon>
        <taxon>Solanoideae</taxon>
        <taxon>Capsiceae</taxon>
        <taxon>Capsicum</taxon>
    </lineage>
</organism>